<dbReference type="EC" id="2.3.1.46" evidence="1"/>
<dbReference type="EMBL" id="CP000458">
    <property type="protein sequence ID" value="ABK09847.1"/>
    <property type="molecule type" value="Genomic_DNA"/>
</dbReference>
<dbReference type="SMR" id="A0KBH0"/>
<dbReference type="ESTHER" id="burca-metx">
    <property type="family name" value="Homoserine_transacetylase"/>
</dbReference>
<dbReference type="KEGG" id="bch:Bcen2424_3099"/>
<dbReference type="HOGENOM" id="CLU_028760_1_2_4"/>
<dbReference type="UniPathway" id="UPA00051">
    <property type="reaction ID" value="UER00075"/>
</dbReference>
<dbReference type="GO" id="GO:0005737">
    <property type="term" value="C:cytoplasm"/>
    <property type="evidence" value="ECO:0007669"/>
    <property type="project" value="UniProtKB-SubCell"/>
</dbReference>
<dbReference type="GO" id="GO:0004414">
    <property type="term" value="F:homoserine O-acetyltransferase activity"/>
    <property type="evidence" value="ECO:0007669"/>
    <property type="project" value="TreeGrafter"/>
</dbReference>
<dbReference type="GO" id="GO:0008899">
    <property type="term" value="F:homoserine O-succinyltransferase activity"/>
    <property type="evidence" value="ECO:0007669"/>
    <property type="project" value="UniProtKB-UniRule"/>
</dbReference>
<dbReference type="GO" id="GO:0009092">
    <property type="term" value="P:homoserine metabolic process"/>
    <property type="evidence" value="ECO:0007669"/>
    <property type="project" value="TreeGrafter"/>
</dbReference>
<dbReference type="GO" id="GO:0009086">
    <property type="term" value="P:methionine biosynthetic process"/>
    <property type="evidence" value="ECO:0007669"/>
    <property type="project" value="UniProtKB-UniRule"/>
</dbReference>
<dbReference type="FunFam" id="1.10.1740.110:FF:000001">
    <property type="entry name" value="Homoserine O-acetyltransferase"/>
    <property type="match status" value="1"/>
</dbReference>
<dbReference type="Gene3D" id="1.10.1740.110">
    <property type="match status" value="1"/>
</dbReference>
<dbReference type="Gene3D" id="3.40.50.1820">
    <property type="entry name" value="alpha/beta hydrolase"/>
    <property type="match status" value="1"/>
</dbReference>
<dbReference type="HAMAP" id="MF_00296">
    <property type="entry name" value="MetX_acyltransf"/>
    <property type="match status" value="1"/>
</dbReference>
<dbReference type="InterPro" id="IPR000073">
    <property type="entry name" value="AB_hydrolase_1"/>
</dbReference>
<dbReference type="InterPro" id="IPR029058">
    <property type="entry name" value="AB_hydrolase_fold"/>
</dbReference>
<dbReference type="InterPro" id="IPR008220">
    <property type="entry name" value="HAT_MetX-like"/>
</dbReference>
<dbReference type="NCBIfam" id="TIGR01392">
    <property type="entry name" value="homoserO_Ac_trn"/>
    <property type="match status" value="1"/>
</dbReference>
<dbReference type="NCBIfam" id="NF001209">
    <property type="entry name" value="PRK00175.1"/>
    <property type="match status" value="1"/>
</dbReference>
<dbReference type="PANTHER" id="PTHR32268">
    <property type="entry name" value="HOMOSERINE O-ACETYLTRANSFERASE"/>
    <property type="match status" value="1"/>
</dbReference>
<dbReference type="PANTHER" id="PTHR32268:SF11">
    <property type="entry name" value="HOMOSERINE O-ACETYLTRANSFERASE"/>
    <property type="match status" value="1"/>
</dbReference>
<dbReference type="Pfam" id="PF00561">
    <property type="entry name" value="Abhydrolase_1"/>
    <property type="match status" value="1"/>
</dbReference>
<dbReference type="PIRSF" id="PIRSF000443">
    <property type="entry name" value="Homoser_Ac_trans"/>
    <property type="match status" value="1"/>
</dbReference>
<dbReference type="SUPFAM" id="SSF53474">
    <property type="entry name" value="alpha/beta-Hydrolases"/>
    <property type="match status" value="1"/>
</dbReference>
<proteinExistence type="inferred from homology"/>
<reference key="1">
    <citation type="submission" date="2006-08" db="EMBL/GenBank/DDBJ databases">
        <title>Complete sequence of chromosome 1 of Burkholderia cenocepacia HI2424.</title>
        <authorList>
            <person name="Copeland A."/>
            <person name="Lucas S."/>
            <person name="Lapidus A."/>
            <person name="Barry K."/>
            <person name="Detter J.C."/>
            <person name="Glavina del Rio T."/>
            <person name="Hammon N."/>
            <person name="Israni S."/>
            <person name="Pitluck S."/>
            <person name="Chain P."/>
            <person name="Malfatti S."/>
            <person name="Shin M."/>
            <person name="Vergez L."/>
            <person name="Schmutz J."/>
            <person name="Larimer F."/>
            <person name="Land M."/>
            <person name="Hauser L."/>
            <person name="Kyrpides N."/>
            <person name="Kim E."/>
            <person name="LiPuma J.J."/>
            <person name="Gonzalez C.F."/>
            <person name="Konstantinidis K."/>
            <person name="Tiedje J.M."/>
            <person name="Richardson P."/>
        </authorList>
    </citation>
    <scope>NUCLEOTIDE SEQUENCE [LARGE SCALE GENOMIC DNA]</scope>
    <source>
        <strain>HI2424</strain>
    </source>
</reference>
<accession>A0KBH0</accession>
<evidence type="ECO:0000255" key="1">
    <source>
        <dbReference type="HAMAP-Rule" id="MF_00296"/>
    </source>
</evidence>
<name>METXS_BURCH</name>
<organism>
    <name type="scientific">Burkholderia cenocepacia (strain HI2424)</name>
    <dbReference type="NCBI Taxonomy" id="331272"/>
    <lineage>
        <taxon>Bacteria</taxon>
        <taxon>Pseudomonadati</taxon>
        <taxon>Pseudomonadota</taxon>
        <taxon>Betaproteobacteria</taxon>
        <taxon>Burkholderiales</taxon>
        <taxon>Burkholderiaceae</taxon>
        <taxon>Burkholderia</taxon>
        <taxon>Burkholderia cepacia complex</taxon>
    </lineage>
</organism>
<gene>
    <name evidence="1" type="primary">metXS</name>
    <name type="ordered locus">Bcen2424_3099</name>
</gene>
<protein>
    <recommendedName>
        <fullName evidence="1">Homoserine O-succinyltransferase</fullName>
        <shortName evidence="1">HST</shortName>
        <ecNumber evidence="1">2.3.1.46</ecNumber>
    </recommendedName>
    <alternativeName>
        <fullName evidence="1">Homoserine transsuccinylase</fullName>
        <shortName evidence="1">HTS</shortName>
    </alternativeName>
</protein>
<comment type="function">
    <text evidence="1">Transfers a succinyl group from succinyl-CoA to L-homoserine, forming succinyl-L-homoserine.</text>
</comment>
<comment type="catalytic activity">
    <reaction evidence="1">
        <text>L-homoserine + succinyl-CoA = O-succinyl-L-homoserine + CoA</text>
        <dbReference type="Rhea" id="RHEA:22008"/>
        <dbReference type="ChEBI" id="CHEBI:57287"/>
        <dbReference type="ChEBI" id="CHEBI:57292"/>
        <dbReference type="ChEBI" id="CHEBI:57476"/>
        <dbReference type="ChEBI" id="CHEBI:57661"/>
        <dbReference type="EC" id="2.3.1.46"/>
    </reaction>
</comment>
<comment type="pathway">
    <text evidence="1">Amino-acid biosynthesis; L-methionine biosynthesis via de novo pathway; O-succinyl-L-homoserine from L-homoserine: step 1/1.</text>
</comment>
<comment type="subunit">
    <text evidence="1">Homodimer.</text>
</comment>
<comment type="subcellular location">
    <subcellularLocation>
        <location evidence="1">Cytoplasm</location>
    </subcellularLocation>
</comment>
<comment type="similarity">
    <text evidence="1">Belongs to the AB hydrolase superfamily. MetX family.</text>
</comment>
<sequence length="381" mass="41956">MESIGIVAPQTMHFAEPLRLQSGSVLGNYQLVVETYGELNAARSNAVLVCHALNASHHVAGVYADDPRSTGWWDNMVGPGKPLDTNRFFVIGVNNLGSCFGSTGPMSIDPSTGKPYGAKFPVVTVEDWVHAQARVADAFGIERFAAVMGGSLGGMQALAWSLMYPERVAHCIDIASTPKLSAQNIAFNEVARSAILSDPDFHGGDYYAHGVKPKRGLRVARMIGHITYLSDDDMAEKFGRALRRADGALDAYNFSFDVEFEVESYLRYQGDKFADYFDANTYLLITRALDYFDPAKAFDGNLTAALAHTQAKYLIASFSTDWRFAPARSREIVKALLDNKRTVSYAEIDAPHGHDAFLLDDARYHNLLRAYYERIANEVGA</sequence>
<feature type="chain" id="PRO_1000021868" description="Homoserine O-succinyltransferase">
    <location>
        <begin position="1"/>
        <end position="381"/>
    </location>
</feature>
<feature type="domain" description="AB hydrolase-1" evidence="1">
    <location>
        <begin position="45"/>
        <end position="360"/>
    </location>
</feature>
<feature type="active site" description="Nucleophile" evidence="1">
    <location>
        <position position="151"/>
    </location>
</feature>
<feature type="active site" evidence="1">
    <location>
        <position position="321"/>
    </location>
</feature>
<feature type="active site" evidence="1">
    <location>
        <position position="354"/>
    </location>
</feature>
<feature type="binding site" evidence="1">
    <location>
        <position position="221"/>
    </location>
    <ligand>
        <name>substrate</name>
    </ligand>
</feature>
<feature type="binding site" evidence="1">
    <location>
        <position position="355"/>
    </location>
    <ligand>
        <name>substrate</name>
    </ligand>
</feature>
<feature type="site" description="Important for acyl-CoA specificity" evidence="1">
    <location>
        <position position="323"/>
    </location>
</feature>
<keyword id="KW-0012">Acyltransferase</keyword>
<keyword id="KW-0028">Amino-acid biosynthesis</keyword>
<keyword id="KW-0963">Cytoplasm</keyword>
<keyword id="KW-0486">Methionine biosynthesis</keyword>
<keyword id="KW-0808">Transferase</keyword>